<sequence>MEFFFYSSSLATIVFTVCSIFSRNLMYSLLYLILSFVFTSCVFFSLGATFAAALEVIIYAGAIMVLFVFFIMMFNFKKSTLYAEKIFDKNNYYYINFLFLLCILIFPFFFILSYLYKEKIFYMVVSTKLVAIKLFSDYILVIELSSIVLLSALIIVSHIGKIRR</sequence>
<name>NUOJ_BUCBP</name>
<organism>
    <name type="scientific">Buchnera aphidicola subsp. Baizongia pistaciae (strain Bp)</name>
    <dbReference type="NCBI Taxonomy" id="224915"/>
    <lineage>
        <taxon>Bacteria</taxon>
        <taxon>Pseudomonadati</taxon>
        <taxon>Pseudomonadota</taxon>
        <taxon>Gammaproteobacteria</taxon>
        <taxon>Enterobacterales</taxon>
        <taxon>Erwiniaceae</taxon>
        <taxon>Buchnera</taxon>
    </lineage>
</organism>
<dbReference type="EC" id="7.1.1.-"/>
<dbReference type="EMBL" id="AE016826">
    <property type="protein sequence ID" value="AAO26885.1"/>
    <property type="molecule type" value="Genomic_DNA"/>
</dbReference>
<dbReference type="RefSeq" id="WP_011091286.1">
    <property type="nucleotide sequence ID" value="NC_004545.1"/>
</dbReference>
<dbReference type="SMR" id="Q89AT8"/>
<dbReference type="STRING" id="224915.bbp_151"/>
<dbReference type="KEGG" id="bab:bbp_151"/>
<dbReference type="eggNOG" id="COG0839">
    <property type="taxonomic scope" value="Bacteria"/>
</dbReference>
<dbReference type="HOGENOM" id="CLU_085957_0_1_6"/>
<dbReference type="OrthoDB" id="9790848at2"/>
<dbReference type="Proteomes" id="UP000000601">
    <property type="component" value="Chromosome"/>
</dbReference>
<dbReference type="GO" id="GO:0005886">
    <property type="term" value="C:plasma membrane"/>
    <property type="evidence" value="ECO:0007669"/>
    <property type="project" value="UniProtKB-SubCell"/>
</dbReference>
<dbReference type="GO" id="GO:0008137">
    <property type="term" value="F:NADH dehydrogenase (ubiquinone) activity"/>
    <property type="evidence" value="ECO:0007669"/>
    <property type="project" value="InterPro"/>
</dbReference>
<dbReference type="GO" id="GO:0048038">
    <property type="term" value="F:quinone binding"/>
    <property type="evidence" value="ECO:0007669"/>
    <property type="project" value="UniProtKB-KW"/>
</dbReference>
<dbReference type="Gene3D" id="1.20.120.1200">
    <property type="entry name" value="NADH-ubiquinone/plastoquinone oxidoreductase chain 6, subunit NuoJ"/>
    <property type="match status" value="1"/>
</dbReference>
<dbReference type="InterPro" id="IPR001457">
    <property type="entry name" value="NADH_UbQ/plastoQ_OxRdtase_su6"/>
</dbReference>
<dbReference type="InterPro" id="IPR042106">
    <property type="entry name" value="Nuo/plastoQ_OxRdtase_6_NuoJ"/>
</dbReference>
<dbReference type="PANTHER" id="PTHR33269">
    <property type="entry name" value="NADH-UBIQUINONE OXIDOREDUCTASE CHAIN 6"/>
    <property type="match status" value="1"/>
</dbReference>
<dbReference type="PANTHER" id="PTHR33269:SF17">
    <property type="entry name" value="NADH-UBIQUINONE OXIDOREDUCTASE CHAIN 6"/>
    <property type="match status" value="1"/>
</dbReference>
<dbReference type="Pfam" id="PF00499">
    <property type="entry name" value="Oxidored_q3"/>
    <property type="match status" value="1"/>
</dbReference>
<reference key="1">
    <citation type="journal article" date="2003" name="Proc. Natl. Acad. Sci. U.S.A.">
        <title>Reductive genome evolution in Buchnera aphidicola.</title>
        <authorList>
            <person name="van Ham R.C.H.J."/>
            <person name="Kamerbeek J."/>
            <person name="Palacios C."/>
            <person name="Rausell C."/>
            <person name="Abascal F."/>
            <person name="Bastolla U."/>
            <person name="Fernandez J.M."/>
            <person name="Jimenez L."/>
            <person name="Postigo M."/>
            <person name="Silva F.J."/>
            <person name="Tamames J."/>
            <person name="Viguera E."/>
            <person name="Latorre A."/>
            <person name="Valencia A."/>
            <person name="Moran F."/>
            <person name="Moya A."/>
        </authorList>
    </citation>
    <scope>NUCLEOTIDE SEQUENCE [LARGE SCALE GENOMIC DNA]</scope>
    <source>
        <strain>Bp</strain>
    </source>
</reference>
<proteinExistence type="inferred from homology"/>
<feature type="chain" id="PRO_0000118376" description="NADH-quinone oxidoreductase subunit J">
    <location>
        <begin position="1"/>
        <end position="164"/>
    </location>
</feature>
<feature type="transmembrane region" description="Helical" evidence="2">
    <location>
        <begin position="1"/>
        <end position="21"/>
    </location>
</feature>
<feature type="transmembrane region" description="Helical" evidence="2">
    <location>
        <begin position="30"/>
        <end position="50"/>
    </location>
</feature>
<feature type="transmembrane region" description="Helical" evidence="2">
    <location>
        <begin position="54"/>
        <end position="74"/>
    </location>
</feature>
<feature type="transmembrane region" description="Helical" evidence="2">
    <location>
        <begin position="94"/>
        <end position="114"/>
    </location>
</feature>
<feature type="transmembrane region" description="Helical" evidence="2">
    <location>
        <begin position="138"/>
        <end position="158"/>
    </location>
</feature>
<protein>
    <recommendedName>
        <fullName>NADH-quinone oxidoreductase subunit J</fullName>
        <ecNumber>7.1.1.-</ecNumber>
    </recommendedName>
    <alternativeName>
        <fullName>NADH dehydrogenase I subunit J</fullName>
    </alternativeName>
    <alternativeName>
        <fullName>NDH-1 subunit J</fullName>
    </alternativeName>
</protein>
<gene>
    <name type="primary">nuoJ</name>
    <name type="ordered locus">bbp_151</name>
</gene>
<comment type="function">
    <text evidence="1">NDH-1 shuttles electrons from NADH, via FMN and iron-sulfur (Fe-S) centers, to quinones in the respiratory chain. Couples the redox reaction to proton translocation (for every two electrons transferred, four hydrogen ions are translocated across the cytoplasmic membrane), and thus conserves the redox energy in a proton gradient (By similarity).</text>
</comment>
<comment type="catalytic activity">
    <reaction>
        <text>a quinone + NADH + 5 H(+)(in) = a quinol + NAD(+) + 4 H(+)(out)</text>
        <dbReference type="Rhea" id="RHEA:57888"/>
        <dbReference type="ChEBI" id="CHEBI:15378"/>
        <dbReference type="ChEBI" id="CHEBI:24646"/>
        <dbReference type="ChEBI" id="CHEBI:57540"/>
        <dbReference type="ChEBI" id="CHEBI:57945"/>
        <dbReference type="ChEBI" id="CHEBI:132124"/>
    </reaction>
</comment>
<comment type="subunit">
    <text evidence="1">Composed of 13 different subunits. Subunits NuoA, H, J, K, L, M, N constitute the membrane sector of the complex (By similarity).</text>
</comment>
<comment type="subcellular location">
    <subcellularLocation>
        <location evidence="3">Cell membrane</location>
        <topology evidence="3">Multi-pass membrane protein</topology>
    </subcellularLocation>
</comment>
<comment type="similarity">
    <text evidence="3">Belongs to the complex I subunit 6 family.</text>
</comment>
<evidence type="ECO:0000250" key="1"/>
<evidence type="ECO:0000255" key="2"/>
<evidence type="ECO:0000305" key="3"/>
<accession>Q89AT8</accession>
<keyword id="KW-1003">Cell membrane</keyword>
<keyword id="KW-0472">Membrane</keyword>
<keyword id="KW-0520">NAD</keyword>
<keyword id="KW-0874">Quinone</keyword>
<keyword id="KW-1185">Reference proteome</keyword>
<keyword id="KW-1278">Translocase</keyword>
<keyword id="KW-0812">Transmembrane</keyword>
<keyword id="KW-1133">Transmembrane helix</keyword>